<accession>Q16943</accession>
<name>VP33_APLCA</name>
<organism>
    <name type="scientific">Aplysia californica</name>
    <name type="common">California sea hare</name>
    <dbReference type="NCBI Taxonomy" id="6500"/>
    <lineage>
        <taxon>Eukaryota</taxon>
        <taxon>Metazoa</taxon>
        <taxon>Spiralia</taxon>
        <taxon>Lophotrochozoa</taxon>
        <taxon>Mollusca</taxon>
        <taxon>Gastropoda</taxon>
        <taxon>Heterobranchia</taxon>
        <taxon>Euthyneura</taxon>
        <taxon>Tectipleura</taxon>
        <taxon>Aplysiida</taxon>
        <taxon>Aplysioidea</taxon>
        <taxon>Aplysiidae</taxon>
        <taxon>Aplysia</taxon>
    </lineage>
</organism>
<dbReference type="EMBL" id="U36779">
    <property type="protein sequence ID" value="AAC46883.1"/>
    <property type="molecule type" value="mRNA"/>
</dbReference>
<dbReference type="PIR" id="A57245">
    <property type="entry name" value="A57245"/>
</dbReference>
<dbReference type="RefSeq" id="NP_001191451.1">
    <property type="nucleotide sequence ID" value="NM_001204522.1"/>
</dbReference>
<dbReference type="SMR" id="Q16943"/>
<dbReference type="EnsemblMetazoa" id="NM_001204522.1">
    <property type="protein sequence ID" value="NP_001191451.1"/>
    <property type="gene ID" value="LOC100533208"/>
</dbReference>
<dbReference type="GeneID" id="100533208"/>
<dbReference type="OrthoDB" id="264603at2759"/>
<dbReference type="Proteomes" id="UP000694888">
    <property type="component" value="Unplaced"/>
</dbReference>
<dbReference type="GO" id="GO:0005789">
    <property type="term" value="C:endoplasmic reticulum membrane"/>
    <property type="evidence" value="ECO:0007669"/>
    <property type="project" value="InterPro"/>
</dbReference>
<dbReference type="GO" id="GO:0043005">
    <property type="term" value="C:neuron projection"/>
    <property type="evidence" value="ECO:0007669"/>
    <property type="project" value="UniProtKB-KW"/>
</dbReference>
<dbReference type="GO" id="GO:0005886">
    <property type="term" value="C:plasma membrane"/>
    <property type="evidence" value="ECO:0007669"/>
    <property type="project" value="TreeGrafter"/>
</dbReference>
<dbReference type="GO" id="GO:0045202">
    <property type="term" value="C:synapse"/>
    <property type="evidence" value="ECO:0007669"/>
    <property type="project" value="UniProtKB-SubCell"/>
</dbReference>
<dbReference type="GO" id="GO:0033149">
    <property type="term" value="F:FFAT motif binding"/>
    <property type="evidence" value="ECO:0007669"/>
    <property type="project" value="TreeGrafter"/>
</dbReference>
<dbReference type="GO" id="GO:0090158">
    <property type="term" value="P:endoplasmic reticulum membrane organization"/>
    <property type="evidence" value="ECO:0007669"/>
    <property type="project" value="TreeGrafter"/>
</dbReference>
<dbReference type="GO" id="GO:0061817">
    <property type="term" value="P:endoplasmic reticulum-plasma membrane tethering"/>
    <property type="evidence" value="ECO:0007669"/>
    <property type="project" value="TreeGrafter"/>
</dbReference>
<dbReference type="FunFam" id="2.60.40.10:FF:000334">
    <property type="entry name" value="vesicle-associated membrane protein-associated protein A isoform X1"/>
    <property type="match status" value="1"/>
</dbReference>
<dbReference type="Gene3D" id="2.60.40.10">
    <property type="entry name" value="Immunoglobulins"/>
    <property type="match status" value="1"/>
</dbReference>
<dbReference type="InterPro" id="IPR013783">
    <property type="entry name" value="Ig-like_fold"/>
</dbReference>
<dbReference type="InterPro" id="IPR000535">
    <property type="entry name" value="MSP_dom"/>
</dbReference>
<dbReference type="InterPro" id="IPR008962">
    <property type="entry name" value="PapD-like_sf"/>
</dbReference>
<dbReference type="InterPro" id="IPR016763">
    <property type="entry name" value="VAP"/>
</dbReference>
<dbReference type="PANTHER" id="PTHR10809:SF6">
    <property type="entry name" value="AT11025P-RELATED"/>
    <property type="match status" value="1"/>
</dbReference>
<dbReference type="PANTHER" id="PTHR10809">
    <property type="entry name" value="VESICLE-ASSOCIATED MEMBRANE PROTEIN-ASSOCIATED PROTEIN"/>
    <property type="match status" value="1"/>
</dbReference>
<dbReference type="Pfam" id="PF00635">
    <property type="entry name" value="Motile_Sperm"/>
    <property type="match status" value="1"/>
</dbReference>
<dbReference type="PIRSF" id="PIRSF019693">
    <property type="entry name" value="VAMP-associated"/>
    <property type="match status" value="1"/>
</dbReference>
<dbReference type="SUPFAM" id="SSF49354">
    <property type="entry name" value="PapD-like"/>
    <property type="match status" value="1"/>
</dbReference>
<dbReference type="PROSITE" id="PS50202">
    <property type="entry name" value="MSP"/>
    <property type="match status" value="1"/>
</dbReference>
<proteinExistence type="evidence at transcript level"/>
<feature type="chain" id="PRO_0000213469" description="Vesicle-associated membrane protein/synaptobrevin-binding protein">
    <location>
        <begin position="1"/>
        <end position="260"/>
    </location>
</feature>
<feature type="topological domain" description="Cytoplasmic" evidence="1">
    <location>
        <begin position="1"/>
        <end position="238"/>
    </location>
</feature>
<feature type="transmembrane region" description="Helical; Anchor for type IV membrane protein" evidence="1">
    <location>
        <begin position="239"/>
        <end position="259"/>
    </location>
</feature>
<feature type="domain" description="MSP" evidence="2">
    <location>
        <begin position="7"/>
        <end position="125"/>
    </location>
</feature>
<feature type="region of interest" description="Disordered" evidence="3">
    <location>
        <begin position="127"/>
        <end position="177"/>
    </location>
</feature>
<feature type="coiled-coil region" evidence="1">
    <location>
        <begin position="172"/>
        <end position="216"/>
    </location>
</feature>
<evidence type="ECO:0000255" key="1"/>
<evidence type="ECO:0000255" key="2">
    <source>
        <dbReference type="PROSITE-ProRule" id="PRU00132"/>
    </source>
</evidence>
<evidence type="ECO:0000256" key="3">
    <source>
        <dbReference type="SAM" id="MobiDB-lite"/>
    </source>
</evidence>
<evidence type="ECO:0000305" key="4"/>
<sequence length="260" mass="28329">MASHEQALILEPAGELRFKGPFTDVVTADLKLSNPTDRRICFKVKTTAPKRYCVRPNSGILEPKTSIAVAVMLQPFNYDPNEKNKHKFMVQSMYAPDHVVESQELLWKDAPPESLMDTKLRCVFEMPDGSHQAPASDASRATDAGAHFSESALEDPTVASRKTETQSPKRVGAVGSAGEDVKKLQHELKKAQSEITSLKGENSQLKDEGIRLRKVAMTDTVSPTPLNPSPAPAAAVRAFPPVVYVVAAIILGLIIGKFLL</sequence>
<protein>
    <recommendedName>
        <fullName>Vesicle-associated membrane protein/synaptobrevin-binding protein</fullName>
    </recommendedName>
    <alternativeName>
        <fullName>VAP-33</fullName>
    </alternativeName>
</protein>
<comment type="function">
    <text>Required for neurotransmitter release. Interacts with VAMP.</text>
</comment>
<comment type="subcellular location">
    <subcellularLocation>
        <location evidence="4">Membrane</location>
        <topology evidence="4">Single-pass type IV membrane protein</topology>
    </subcellularLocation>
    <subcellularLocation>
        <location>Synapse</location>
        <location>Synaptosome</location>
    </subcellularLocation>
</comment>
<comment type="tissue specificity">
    <text>Detected only in the central nervous system and the gill of aplysia.</text>
</comment>
<comment type="similarity">
    <text evidence="4">Belongs to the VAMP-associated protein (VAP) (TC 9.B.17) family.</text>
</comment>
<reference key="1">
    <citation type="journal article" date="1995" name="Science">
        <title>A VAMP-binding protein from Aplysia required for neurotransmitter release.</title>
        <authorList>
            <person name="Skehel P.A."/>
            <person name="Martin K.C."/>
            <person name="Kandel E.R."/>
            <person name="Bartsch D."/>
        </authorList>
    </citation>
    <scope>NUCLEOTIDE SEQUENCE [MRNA]</scope>
</reference>
<keyword id="KW-0175">Coiled coil</keyword>
<keyword id="KW-0472">Membrane</keyword>
<keyword id="KW-0770">Synapse</keyword>
<keyword id="KW-0771">Synaptosome</keyword>
<keyword id="KW-0812">Transmembrane</keyword>
<keyword id="KW-1133">Transmembrane helix</keyword>